<sequence length="130" mass="14366">MARQTRKVSPTKIKKRTYRGIVYIQAGHHNTIITLANLRGEVLCWSSAGACGFRGKRKATTFAAKKAAEVVAKKSREFALNEAKILVTGPGQGRETAIREIFKAGIKVNVIREKTGIPHNGCRPPKKRRV</sequence>
<keyword id="KW-0150">Chloroplast</keyword>
<keyword id="KW-0934">Plastid</keyword>
<keyword id="KW-0687">Ribonucleoprotein</keyword>
<keyword id="KW-0689">Ribosomal protein</keyword>
<keyword id="KW-0694">RNA-binding</keyword>
<keyword id="KW-0699">rRNA-binding</keyword>
<organism>
    <name type="scientific">Tetradesmus obliquus</name>
    <name type="common">Green alga</name>
    <name type="synonym">Acutodesmus obliquus</name>
    <dbReference type="NCBI Taxonomy" id="3088"/>
    <lineage>
        <taxon>Eukaryota</taxon>
        <taxon>Viridiplantae</taxon>
        <taxon>Chlorophyta</taxon>
        <taxon>core chlorophytes</taxon>
        <taxon>Chlorophyceae</taxon>
        <taxon>CS clade</taxon>
        <taxon>Sphaeropleales</taxon>
        <taxon>Scenedesmaceae</taxon>
        <taxon>Tetradesmus</taxon>
    </lineage>
</organism>
<evidence type="ECO:0000255" key="1">
    <source>
        <dbReference type="HAMAP-Rule" id="MF_01310"/>
    </source>
</evidence>
<evidence type="ECO:0000305" key="2"/>
<reference key="1">
    <citation type="journal article" date="2006" name="BMC Evol. Biol.">
        <title>The complete chloroplast genome sequence of the chlorophycean green alga Scenedesmus obliquus reveals a compact gene organization and a biased distribution of genes on the two DNA strands.</title>
        <authorList>
            <person name="de Cambiaire J.-C."/>
            <person name="Otis C."/>
            <person name="Lemieux C."/>
            <person name="Turmel M."/>
        </authorList>
    </citation>
    <scope>NUCLEOTIDE SEQUENCE [LARGE SCALE GENOMIC DNA]</scope>
    <source>
        <strain>UTEX 393</strain>
    </source>
</reference>
<protein>
    <recommendedName>
        <fullName evidence="1">Small ribosomal subunit protein uS11c</fullName>
    </recommendedName>
    <alternativeName>
        <fullName evidence="2">30S ribosomal protein S11, chloroplastic</fullName>
    </alternativeName>
</protein>
<geneLocation type="chloroplast"/>
<gene>
    <name evidence="1" type="primary">rps11</name>
</gene>
<dbReference type="EMBL" id="DQ396875">
    <property type="protein sequence ID" value="ABD48256.1"/>
    <property type="molecule type" value="Genomic_DNA"/>
</dbReference>
<dbReference type="RefSeq" id="YP_635973.1">
    <property type="nucleotide sequence ID" value="NC_008101.1"/>
</dbReference>
<dbReference type="SMR" id="Q1KVV1"/>
<dbReference type="GeneID" id="4099833"/>
<dbReference type="GO" id="GO:0009507">
    <property type="term" value="C:chloroplast"/>
    <property type="evidence" value="ECO:0007669"/>
    <property type="project" value="UniProtKB-SubCell"/>
</dbReference>
<dbReference type="GO" id="GO:1990904">
    <property type="term" value="C:ribonucleoprotein complex"/>
    <property type="evidence" value="ECO:0007669"/>
    <property type="project" value="UniProtKB-KW"/>
</dbReference>
<dbReference type="GO" id="GO:0005840">
    <property type="term" value="C:ribosome"/>
    <property type="evidence" value="ECO:0007669"/>
    <property type="project" value="UniProtKB-KW"/>
</dbReference>
<dbReference type="GO" id="GO:0019843">
    <property type="term" value="F:rRNA binding"/>
    <property type="evidence" value="ECO:0007669"/>
    <property type="project" value="UniProtKB-UniRule"/>
</dbReference>
<dbReference type="GO" id="GO:0003735">
    <property type="term" value="F:structural constituent of ribosome"/>
    <property type="evidence" value="ECO:0007669"/>
    <property type="project" value="InterPro"/>
</dbReference>
<dbReference type="GO" id="GO:0006412">
    <property type="term" value="P:translation"/>
    <property type="evidence" value="ECO:0007669"/>
    <property type="project" value="UniProtKB-UniRule"/>
</dbReference>
<dbReference type="Gene3D" id="3.30.420.80">
    <property type="entry name" value="Ribosomal protein S11"/>
    <property type="match status" value="1"/>
</dbReference>
<dbReference type="HAMAP" id="MF_01310">
    <property type="entry name" value="Ribosomal_uS11"/>
    <property type="match status" value="1"/>
</dbReference>
<dbReference type="InterPro" id="IPR001971">
    <property type="entry name" value="Ribosomal_uS11"/>
</dbReference>
<dbReference type="InterPro" id="IPR036967">
    <property type="entry name" value="Ribosomal_uS11_sf"/>
</dbReference>
<dbReference type="NCBIfam" id="NF003698">
    <property type="entry name" value="PRK05309.1"/>
    <property type="match status" value="1"/>
</dbReference>
<dbReference type="PANTHER" id="PTHR11759">
    <property type="entry name" value="40S RIBOSOMAL PROTEIN S14/30S RIBOSOMAL PROTEIN S11"/>
    <property type="match status" value="1"/>
</dbReference>
<dbReference type="Pfam" id="PF00411">
    <property type="entry name" value="Ribosomal_S11"/>
    <property type="match status" value="1"/>
</dbReference>
<dbReference type="PIRSF" id="PIRSF002131">
    <property type="entry name" value="Ribosomal_S11"/>
    <property type="match status" value="1"/>
</dbReference>
<dbReference type="SUPFAM" id="SSF53137">
    <property type="entry name" value="Translational machinery components"/>
    <property type="match status" value="1"/>
</dbReference>
<proteinExistence type="inferred from homology"/>
<name>RR11_TETOB</name>
<comment type="subunit">
    <text evidence="1">Part of the 30S ribosomal subunit.</text>
</comment>
<comment type="subcellular location">
    <subcellularLocation>
        <location>Plastid</location>
        <location>Chloroplast</location>
    </subcellularLocation>
</comment>
<comment type="similarity">
    <text evidence="1">Belongs to the universal ribosomal protein uS11 family.</text>
</comment>
<accession>Q1KVV1</accession>
<feature type="chain" id="PRO_0000276657" description="Small ribosomal subunit protein uS11c">
    <location>
        <begin position="1"/>
        <end position="130"/>
    </location>
</feature>